<keyword id="KW-0445">Lipid transport</keyword>
<keyword id="KW-1185">Reference proteome</keyword>
<keyword id="KW-0964">Secreted</keyword>
<keyword id="KW-0732">Signal</keyword>
<keyword id="KW-0813">Transport</keyword>
<reference key="1">
    <citation type="submission" date="2015-03" db="EMBL/GenBank/DDBJ databases">
        <title>Sooty reference genome and diversity panel.</title>
        <authorList>
            <person name="Liu Y."/>
            <person name="Hughes D.S."/>
            <person name="Murali S."/>
            <person name="Raveendran M."/>
            <person name="Korchina V."/>
            <person name="Wang M."/>
            <person name="Jhangiani S."/>
            <person name="Bandaranaike D."/>
            <person name="Bellair M."/>
            <person name="Blankenburg K."/>
            <person name="Chao H."/>
            <person name="Dahdouli M."/>
            <person name="Dinh H."/>
            <person name="Doddapaneni H."/>
            <person name="English A."/>
            <person name="Firestine M."/>
            <person name="Gross S."/>
            <person name="Hernandez B."/>
            <person name="Javaid M."/>
            <person name="Jayaseelan J."/>
            <person name="Jones J."/>
            <person name="Joshi V."/>
            <person name="Khan Z."/>
            <person name="Kovar C."/>
            <person name="Lee S."/>
            <person name="Newsham I."/>
            <person name="Nguyen L."/>
            <person name="Okwuonu G."/>
            <person name="Ongeri F."/>
            <person name="Osuji N."/>
            <person name="Pu L.-L."/>
            <person name="Puazo M."/>
            <person name="Qu C."/>
            <person name="Quiroz J."/>
            <person name="Raj R."/>
            <person name="Reid J.G."/>
            <person name="Santibanez J."/>
            <person name="Scheel M."/>
            <person name="Sexton D."/>
            <person name="Shah N."/>
            <person name="Skinner E."/>
            <person name="Vee V."/>
            <person name="Wu Y."/>
            <person name="Han Y."/>
            <person name="Muzny D.M."/>
            <person name="Richards S."/>
            <person name="Worley K.C."/>
            <person name="Rogers J."/>
            <person name="Gibbs R.A."/>
        </authorList>
    </citation>
    <scope>NUCLEOTIDE SEQUENCE [LARGE SCALE GENOMIC DNA]</scope>
</reference>
<reference key="2">
    <citation type="journal article" date="2013" name="Front. Biol.">
        <title>Proteogenomic Review of the Changes in Primate apoC-I during Evolution.</title>
        <authorList>
            <person name="Puppione D."/>
            <person name="Whitelegge J.P."/>
        </authorList>
    </citation>
    <scope>REVIEW</scope>
</reference>
<reference key="3">
    <citation type="journal article" date="2014" name="Comp. Biochem. Physiol.">
        <title>Higher primates, but not New World monkeys, have a duplicate set of enhancers flanking their apoC-I genes.</title>
        <authorList>
            <person name="Puppione D.L."/>
        </authorList>
    </citation>
    <scope>GENE DUPLICATION</scope>
</reference>
<reference key="4">
    <citation type="unpublished observations" date="2018-03">
        <authorList>
            <person name="Puppione D.L."/>
        </authorList>
    </citation>
    <scope>IDENTIFICATION</scope>
</reference>
<organism>
    <name type="scientific">Cercocebus atys</name>
    <name type="common">Sooty mangabey</name>
    <name type="synonym">Cercocebus torquatus atys</name>
    <dbReference type="NCBI Taxonomy" id="9531"/>
    <lineage>
        <taxon>Eukaryota</taxon>
        <taxon>Metazoa</taxon>
        <taxon>Chordata</taxon>
        <taxon>Craniata</taxon>
        <taxon>Vertebrata</taxon>
        <taxon>Euteleostomi</taxon>
        <taxon>Mammalia</taxon>
        <taxon>Eutheria</taxon>
        <taxon>Euarchontoglires</taxon>
        <taxon>Primates</taxon>
        <taxon>Haplorrhini</taxon>
        <taxon>Catarrhini</taxon>
        <taxon>Cercopithecidae</taxon>
        <taxon>Cercopithecinae</taxon>
        <taxon>Cercocebus</taxon>
    </lineage>
</organism>
<sequence length="81" mass="9235">MRLFLSLLVVVLSIVLEGPTPAQGVPDVSNPFDVLEEFGKTLEDNVREFINLITQSELPAKTRDWFSETFRKVKEKLKINS</sequence>
<comment type="subcellular location">
    <subcellularLocation>
        <location evidence="1">Secreted</location>
    </subcellularLocation>
</comment>
<comment type="miscellaneous">
    <text evidence="4">Apolipoprotein C-I is present in acidic (APOC1A) and basic (APOC1B) forms in P.paniscus, P.abelii and P.troglodytes and perhaps also in baboons and macaques. The two genes for ApoC-I arose through a duplication process that occurred after the divergence of New World monkeys from the human lineage. In human, the acidic form has become a pseudogene sometime between the divergence of bonobos and chimpanzees from the human lineage and the appearance of the Denisovans. Pseudogenization resulted when the codon for the penultimate amino acid in the signal sequence was changed to a stop codon.</text>
</comment>
<comment type="similarity">
    <text evidence="5">Belongs to the apolipoprotein C1 family.</text>
</comment>
<name>APO1A_CERAT</name>
<dbReference type="EMBL" id="JZLG01000000">
    <property type="status" value="NOT_ANNOTATED_CDS"/>
    <property type="molecule type" value="Genomic_DNA"/>
</dbReference>
<dbReference type="SMR" id="P0DPG0"/>
<dbReference type="STRING" id="9531.ENSCATP00000011778"/>
<dbReference type="Ensembl" id="ENSCATT00000035904.1">
    <property type="protein sequence ID" value="ENSCATP00000011778.1"/>
    <property type="gene ID" value="ENSCATG00000030093.1"/>
</dbReference>
<dbReference type="GeneID" id="105595127"/>
<dbReference type="KEGG" id="caty:105595127"/>
<dbReference type="GeneTree" id="ENSGT00390000011584"/>
<dbReference type="OMA" id="PAKMWLE"/>
<dbReference type="OrthoDB" id="17815at314294"/>
<dbReference type="Proteomes" id="UP000233060">
    <property type="component" value="Unassembled WGS sequence"/>
</dbReference>
<dbReference type="Bgee" id="ENSCATG00000030093">
    <property type="expression patterns" value="Expressed in liver and 1 other cell type or tissue"/>
</dbReference>
<dbReference type="GO" id="GO:0034364">
    <property type="term" value="C:high-density lipoprotein particle"/>
    <property type="evidence" value="ECO:0007669"/>
    <property type="project" value="TreeGrafter"/>
</dbReference>
<dbReference type="GO" id="GO:0034361">
    <property type="term" value="C:very-low-density lipoprotein particle"/>
    <property type="evidence" value="ECO:0007669"/>
    <property type="project" value="TreeGrafter"/>
</dbReference>
<dbReference type="GO" id="GO:0005504">
    <property type="term" value="F:fatty acid binding"/>
    <property type="evidence" value="ECO:0007669"/>
    <property type="project" value="TreeGrafter"/>
</dbReference>
<dbReference type="GO" id="GO:0004859">
    <property type="term" value="F:phospholipase inhibitor activity"/>
    <property type="evidence" value="ECO:0007669"/>
    <property type="project" value="TreeGrafter"/>
</dbReference>
<dbReference type="GO" id="GO:0006869">
    <property type="term" value="P:lipid transport"/>
    <property type="evidence" value="ECO:0007669"/>
    <property type="project" value="UniProtKB-KW"/>
</dbReference>
<dbReference type="GO" id="GO:0042157">
    <property type="term" value="P:lipoprotein metabolic process"/>
    <property type="evidence" value="ECO:0007669"/>
    <property type="project" value="InterPro"/>
</dbReference>
<dbReference type="GO" id="GO:0032375">
    <property type="term" value="P:negative regulation of cholesterol transport"/>
    <property type="evidence" value="ECO:0007669"/>
    <property type="project" value="TreeGrafter"/>
</dbReference>
<dbReference type="GO" id="GO:0050995">
    <property type="term" value="P:negative regulation of lipid catabolic process"/>
    <property type="evidence" value="ECO:0007669"/>
    <property type="project" value="TreeGrafter"/>
</dbReference>
<dbReference type="GO" id="GO:0010916">
    <property type="term" value="P:negative regulation of very-low-density lipoprotein particle clearance"/>
    <property type="evidence" value="ECO:0007669"/>
    <property type="project" value="TreeGrafter"/>
</dbReference>
<dbReference type="GO" id="GO:0006641">
    <property type="term" value="P:triglyceride metabolic process"/>
    <property type="evidence" value="ECO:0007669"/>
    <property type="project" value="TreeGrafter"/>
</dbReference>
<dbReference type="GO" id="GO:0034447">
    <property type="term" value="P:very-low-density lipoprotein particle clearance"/>
    <property type="evidence" value="ECO:0007669"/>
    <property type="project" value="TreeGrafter"/>
</dbReference>
<dbReference type="Gene3D" id="4.10.260.30">
    <property type="entry name" value="Apolipoprotein C-I"/>
    <property type="match status" value="1"/>
</dbReference>
<dbReference type="InterPro" id="IPR043081">
    <property type="entry name" value="ApoC-1_sf"/>
</dbReference>
<dbReference type="InterPro" id="IPR006781">
    <property type="entry name" value="ApoC-I"/>
</dbReference>
<dbReference type="PANTHER" id="PTHR16565">
    <property type="entry name" value="APOLIPOPROTEIN C-I"/>
    <property type="match status" value="1"/>
</dbReference>
<dbReference type="PANTHER" id="PTHR16565:SF3">
    <property type="entry name" value="APOLIPOPROTEIN C-I, ACIDIC FORM"/>
    <property type="match status" value="1"/>
</dbReference>
<dbReference type="Pfam" id="PF04691">
    <property type="entry name" value="ApoC-I"/>
    <property type="match status" value="1"/>
</dbReference>
<gene>
    <name type="primary">APOC1A</name>
</gene>
<accession>P0DPG0</accession>
<evidence type="ECO:0000250" key="1">
    <source>
        <dbReference type="UniProtKB" id="P02654"/>
    </source>
</evidence>
<evidence type="ECO:0000250" key="2">
    <source>
        <dbReference type="UniProtKB" id="P86336"/>
    </source>
</evidence>
<evidence type="ECO:0000255" key="3"/>
<evidence type="ECO:0000303" key="4">
    <source>
    </source>
</evidence>
<evidence type="ECO:0000305" key="5"/>
<feature type="signal peptide" evidence="3">
    <location>
        <begin position="1"/>
        <end position="24"/>
    </location>
</feature>
<feature type="chain" id="PRO_0000444096" description="Apolipoprotein C-I, acidic form">
    <location>
        <begin position="25"/>
        <end position="81"/>
    </location>
</feature>
<feature type="chain" id="PRO_0000444097" description="Truncated apolipoprotein C-I, acidic form" evidence="2">
    <location>
        <begin position="27"/>
        <end position="81"/>
    </location>
</feature>
<protein>
    <recommendedName>
        <fullName>Apolipoprotein C-I, acidic form</fullName>
        <shortName>Apo-CIA</shortName>
        <shortName>ApoC-IA</shortName>
    </recommendedName>
    <alternativeName>
        <fullName>Apolipoprotein C1A</fullName>
    </alternativeName>
    <component>
        <recommendedName>
            <fullName>Truncated apolipoprotein C-I, acidic form</fullName>
            <shortName>Apo-CIA'</shortName>
            <shortName>ApoC-IA'</shortName>
        </recommendedName>
    </component>
</protein>
<proteinExistence type="inferred from homology"/>